<dbReference type="EMBL" id="AB098737">
    <property type="protein sequence ID" value="BAD51378.1"/>
    <property type="molecule type" value="Genomic_DNA"/>
</dbReference>
<dbReference type="EMBL" id="AF305622">
    <property type="protein sequence ID" value="AAL09365.1"/>
    <property type="molecule type" value="mRNA"/>
</dbReference>
<dbReference type="EMBL" id="AC012645">
    <property type="status" value="NOT_ANNOTATED_CDS"/>
    <property type="molecule type" value="Genomic_DNA"/>
</dbReference>
<dbReference type="EMBL" id="CH471238">
    <property type="protein sequence ID" value="EAW79925.1"/>
    <property type="status" value="ALT_INIT"/>
    <property type="molecule type" value="Genomic_DNA"/>
</dbReference>
<dbReference type="EMBL" id="BC005009">
    <property type="protein sequence ID" value="AAH05009.3"/>
    <property type="molecule type" value="mRNA"/>
</dbReference>
<dbReference type="EMBL" id="BC050664">
    <property type="protein sequence ID" value="AAH50664.2"/>
    <property type="molecule type" value="mRNA"/>
</dbReference>
<dbReference type="CCDS" id="CCDS42147.1">
    <molecule id="P61236-2"/>
</dbReference>
<dbReference type="CCDS" id="CCDS45459.1">
    <molecule id="P61236-1"/>
</dbReference>
<dbReference type="RefSeq" id="NP_001138996.1">
    <molecule id="P61236-1"/>
    <property type="nucleotide sequence ID" value="NM_001145524.2"/>
</dbReference>
<dbReference type="RefSeq" id="NP_113665.3">
    <molecule id="P61236-2"/>
    <property type="nucleotide sequence ID" value="NM_031477.4"/>
</dbReference>
<dbReference type="SMR" id="P61236"/>
<dbReference type="BioGRID" id="123740">
    <property type="interactions" value="137"/>
</dbReference>
<dbReference type="FunCoup" id="P61236">
    <property type="interactions" value="290"/>
</dbReference>
<dbReference type="IntAct" id="P61236">
    <property type="interactions" value="13"/>
</dbReference>
<dbReference type="STRING" id="9606.ENSP00000381821"/>
<dbReference type="BioMuta" id="YPEL3"/>
<dbReference type="DMDM" id="47117782"/>
<dbReference type="MassIVE" id="P61236"/>
<dbReference type="PaxDb" id="9606-ENSP00000381821"/>
<dbReference type="PeptideAtlas" id="P61236"/>
<dbReference type="ProteomicsDB" id="57279">
    <molecule id="P61236-1"/>
</dbReference>
<dbReference type="ProteomicsDB" id="57280">
    <molecule id="P61236-2"/>
</dbReference>
<dbReference type="Pumba" id="P61236"/>
<dbReference type="Antibodypedia" id="27015">
    <property type="antibodies" value="76 antibodies from 25 providers"/>
</dbReference>
<dbReference type="DNASU" id="83719"/>
<dbReference type="Ensembl" id="ENST00000398838.8">
    <molecule id="P61236-1"/>
    <property type="protein sequence ID" value="ENSP00000381818.4"/>
    <property type="gene ID" value="ENSG00000090238.12"/>
</dbReference>
<dbReference type="Ensembl" id="ENST00000398841.6">
    <molecule id="P61236-2"/>
    <property type="protein sequence ID" value="ENSP00000381821.1"/>
    <property type="gene ID" value="ENSG00000090238.12"/>
</dbReference>
<dbReference type="Ensembl" id="ENST00000563788.5">
    <molecule id="P61236-1"/>
    <property type="protein sequence ID" value="ENSP00000457976.1"/>
    <property type="gene ID" value="ENSG00000090238.12"/>
</dbReference>
<dbReference type="Ensembl" id="ENST00000566595.5">
    <molecule id="P61236-1"/>
    <property type="protein sequence ID" value="ENSP00000456427.1"/>
    <property type="gene ID" value="ENSG00000090238.12"/>
</dbReference>
<dbReference type="GeneID" id="83719"/>
<dbReference type="KEGG" id="hsa:83719"/>
<dbReference type="MANE-Select" id="ENST00000398841.6">
    <molecule id="P61236-2"/>
    <property type="protein sequence ID" value="ENSP00000381821.1"/>
    <property type="RefSeq nucleotide sequence ID" value="NM_031477.5"/>
    <property type="RefSeq protein sequence ID" value="NP_113665.3"/>
</dbReference>
<dbReference type="UCSC" id="uc002dwl.3">
    <molecule id="P61236-1"/>
    <property type="organism name" value="human"/>
</dbReference>
<dbReference type="AGR" id="HGNC:18327"/>
<dbReference type="CTD" id="83719"/>
<dbReference type="DisGeNET" id="83719"/>
<dbReference type="GeneCards" id="YPEL3"/>
<dbReference type="HGNC" id="HGNC:18327">
    <property type="gene designation" value="YPEL3"/>
</dbReference>
<dbReference type="HPA" id="ENSG00000090238">
    <property type="expression patterns" value="Low tissue specificity"/>
</dbReference>
<dbReference type="MIM" id="609724">
    <property type="type" value="gene"/>
</dbReference>
<dbReference type="neXtProt" id="NX_P61236"/>
<dbReference type="OpenTargets" id="ENSG00000090238"/>
<dbReference type="PharmGKB" id="PA134985092"/>
<dbReference type="VEuPathDB" id="HostDB:ENSG00000090238"/>
<dbReference type="eggNOG" id="KOG3399">
    <property type="taxonomic scope" value="Eukaryota"/>
</dbReference>
<dbReference type="GeneTree" id="ENSGT00940000161514"/>
<dbReference type="HOGENOM" id="CLU_043857_5_2_1"/>
<dbReference type="InParanoid" id="P61236"/>
<dbReference type="OMA" id="CADCRQV"/>
<dbReference type="OrthoDB" id="6407410at2759"/>
<dbReference type="PAN-GO" id="P61236">
    <property type="GO annotations" value="0 GO annotations based on evolutionary models"/>
</dbReference>
<dbReference type="PhylomeDB" id="P61236"/>
<dbReference type="TreeFam" id="TF313936"/>
<dbReference type="PathwayCommons" id="P61236"/>
<dbReference type="SignaLink" id="P61236"/>
<dbReference type="BioGRID-ORCS" id="83719">
    <property type="hits" value="32 hits in 1155 CRISPR screens"/>
</dbReference>
<dbReference type="CD-CODE" id="8C2F96ED">
    <property type="entry name" value="Centrosome"/>
</dbReference>
<dbReference type="CD-CODE" id="91857CE7">
    <property type="entry name" value="Nucleolus"/>
</dbReference>
<dbReference type="GenomeRNAi" id="83719"/>
<dbReference type="Pharos" id="P61236">
    <property type="development level" value="Tbio"/>
</dbReference>
<dbReference type="PRO" id="PR:P61236"/>
<dbReference type="Proteomes" id="UP000005640">
    <property type="component" value="Chromosome 16"/>
</dbReference>
<dbReference type="RNAct" id="P61236">
    <property type="molecule type" value="protein"/>
</dbReference>
<dbReference type="Bgee" id="ENSG00000090238">
    <property type="expression patterns" value="Expressed in right hemisphere of cerebellum and 184 other cell types or tissues"/>
</dbReference>
<dbReference type="ExpressionAtlas" id="P61236">
    <property type="expression patterns" value="baseline and differential"/>
</dbReference>
<dbReference type="GO" id="GO:0005730">
    <property type="term" value="C:nucleolus"/>
    <property type="evidence" value="ECO:0007669"/>
    <property type="project" value="UniProtKB-SubCell"/>
</dbReference>
<dbReference type="GO" id="GO:0046872">
    <property type="term" value="F:metal ion binding"/>
    <property type="evidence" value="ECO:0007669"/>
    <property type="project" value="UniProtKB-KW"/>
</dbReference>
<dbReference type="GO" id="GO:2000774">
    <property type="term" value="P:positive regulation of cellular senescence"/>
    <property type="evidence" value="ECO:0000314"/>
    <property type="project" value="HGNC"/>
</dbReference>
<dbReference type="InterPro" id="IPR034751">
    <property type="entry name" value="Yippee"/>
</dbReference>
<dbReference type="InterPro" id="IPR004910">
    <property type="entry name" value="Yippee/Mis18/Cereblon"/>
</dbReference>
<dbReference type="InterPro" id="IPR039058">
    <property type="entry name" value="Yippee_fam"/>
</dbReference>
<dbReference type="PANTHER" id="PTHR13848">
    <property type="entry name" value="PROTEIN YIPPEE-LIKE CG15309-RELATED"/>
    <property type="match status" value="1"/>
</dbReference>
<dbReference type="Pfam" id="PF03226">
    <property type="entry name" value="Yippee-Mis18"/>
    <property type="match status" value="1"/>
</dbReference>
<dbReference type="PROSITE" id="PS51792">
    <property type="entry name" value="YIPPEE"/>
    <property type="match status" value="1"/>
</dbReference>
<feature type="chain" id="PRO_0000212389" description="Protein yippee-like 3">
    <location>
        <begin position="1"/>
        <end position="119"/>
    </location>
</feature>
<feature type="domain" description="Yippee" evidence="2">
    <location>
        <begin position="19"/>
        <end position="116"/>
    </location>
</feature>
<feature type="binding site" evidence="2">
    <location>
        <position position="23"/>
    </location>
    <ligand>
        <name>Zn(2+)</name>
        <dbReference type="ChEBI" id="CHEBI:29105"/>
    </ligand>
</feature>
<feature type="binding site" evidence="2">
    <location>
        <position position="26"/>
    </location>
    <ligand>
        <name>Zn(2+)</name>
        <dbReference type="ChEBI" id="CHEBI:29105"/>
    </ligand>
</feature>
<feature type="binding site" evidence="2">
    <location>
        <position position="79"/>
    </location>
    <ligand>
        <name>Zn(2+)</name>
        <dbReference type="ChEBI" id="CHEBI:29105"/>
    </ligand>
</feature>
<feature type="binding site" evidence="2">
    <location>
        <position position="82"/>
    </location>
    <ligand>
        <name>Zn(2+)</name>
        <dbReference type="ChEBI" id="CHEBI:29105"/>
    </ligand>
</feature>
<feature type="splice variant" id="VSP_037276" description="In isoform 2." evidence="4">
    <original>M</original>
    <variation>MCVAQVLTAHLLPPRQALGSLCSPWAAPRVGPLPPAPAM</variation>
    <location>
        <position position="1"/>
    </location>
</feature>
<protein>
    <recommendedName>
        <fullName>Protein yippee-like 3</fullName>
    </recommendedName>
</protein>
<gene>
    <name type="primary">YPEL3</name>
    <name type="ORF">FKSG5</name>
</gene>
<comment type="function">
    <text evidence="1">Involved in proliferation and apoptosis in myeloid precursor cells.</text>
</comment>
<comment type="subcellular location">
    <subcellularLocation>
        <location evidence="3">Nucleus</location>
        <location evidence="3">Nucleolus</location>
    </subcellularLocation>
</comment>
<comment type="alternative products">
    <event type="alternative splicing"/>
    <isoform>
        <id>P61236-1</id>
        <name>1</name>
        <sequence type="displayed"/>
    </isoform>
    <isoform>
        <id>P61236-2</id>
        <name>2</name>
        <sequence type="described" ref="VSP_037276"/>
    </isoform>
</comment>
<comment type="tissue specificity">
    <text evidence="3">Widely expressed.</text>
</comment>
<comment type="PTM">
    <text evidence="1">Probably ubiquitinated leading to its degradation by the proteasome.</text>
</comment>
<comment type="similarity">
    <text evidence="5">Belongs to the yippee family.</text>
</comment>
<comment type="sequence caution" evidence="5">
    <conflict type="erroneous initiation">
        <sequence resource="EMBL-CDS" id="EAW79925"/>
    </conflict>
</comment>
<name>YPEL3_HUMAN</name>
<keyword id="KW-0025">Alternative splicing</keyword>
<keyword id="KW-0479">Metal-binding</keyword>
<keyword id="KW-0539">Nucleus</keyword>
<keyword id="KW-1267">Proteomics identification</keyword>
<keyword id="KW-1185">Reference proteome</keyword>
<keyword id="KW-0832">Ubl conjugation</keyword>
<keyword id="KW-0862">Zinc</keyword>
<accession>P61236</accession>
<accession>Q65Z99</accession>
<accession>Q86VK6</accession>
<accession>Q9BSJ4</accession>
<accession>Q9CQB6</accession>
<evidence type="ECO:0000250" key="1"/>
<evidence type="ECO:0000255" key="2">
    <source>
        <dbReference type="PROSITE-ProRule" id="PRU01128"/>
    </source>
</evidence>
<evidence type="ECO:0000269" key="3">
    <source>
    </source>
</evidence>
<evidence type="ECO:0000303" key="4">
    <source>
    </source>
</evidence>
<evidence type="ECO:0000305" key="5"/>
<sequence length="119" mass="13608">MVRISKPKTFQAYLDDCHRRYSCAHCRAHLANHDDLISKSFQGSQGRAYLFNSVVNVGCGPAEERVLLTGLHAVADIHCENCKTTLGWKYEQAFESSQKYKEGKYIIELNHMIKDNGWD</sequence>
<organism>
    <name type="scientific">Homo sapiens</name>
    <name type="common">Human</name>
    <dbReference type="NCBI Taxonomy" id="9606"/>
    <lineage>
        <taxon>Eukaryota</taxon>
        <taxon>Metazoa</taxon>
        <taxon>Chordata</taxon>
        <taxon>Craniata</taxon>
        <taxon>Vertebrata</taxon>
        <taxon>Euteleostomi</taxon>
        <taxon>Mammalia</taxon>
        <taxon>Eutheria</taxon>
        <taxon>Euarchontoglires</taxon>
        <taxon>Primates</taxon>
        <taxon>Haplorrhini</taxon>
        <taxon>Catarrhini</taxon>
        <taxon>Hominidae</taxon>
        <taxon>Homo</taxon>
    </lineage>
</organism>
<proteinExistence type="evidence at protein level"/>
<reference key="1">
    <citation type="journal article" date="2004" name="Gene">
        <title>Identification and characterization of a novel gene family YPEL in a wide spectrum of eukaryotic species.</title>
        <authorList>
            <person name="Hosono K."/>
            <person name="Sasaki T."/>
            <person name="Minoshima S."/>
            <person name="Shimizu N."/>
        </authorList>
    </citation>
    <scope>NUCLEOTIDE SEQUENCE [GENOMIC DNA]</scope>
    <scope>SUBCELLULAR LOCATION</scope>
    <scope>TISSUE SPECIFICITY</scope>
</reference>
<reference key="2">
    <citation type="submission" date="2000-09" db="EMBL/GenBank/DDBJ databases">
        <title>Cloning and characterization of FKSG5, a novel gene related to DiGeorge syndrome.</title>
        <authorList>
            <person name="Wang Y.-G."/>
        </authorList>
    </citation>
    <scope>NUCLEOTIDE SEQUENCE [MRNA] (ISOFORM 1)</scope>
</reference>
<reference key="3">
    <citation type="journal article" date="2004" name="Nature">
        <title>The sequence and analysis of duplication-rich human chromosome 16.</title>
        <authorList>
            <person name="Martin J."/>
            <person name="Han C."/>
            <person name="Gordon L.A."/>
            <person name="Terry A."/>
            <person name="Prabhakar S."/>
            <person name="She X."/>
            <person name="Xie G."/>
            <person name="Hellsten U."/>
            <person name="Chan Y.M."/>
            <person name="Altherr M."/>
            <person name="Couronne O."/>
            <person name="Aerts A."/>
            <person name="Bajorek E."/>
            <person name="Black S."/>
            <person name="Blumer H."/>
            <person name="Branscomb E."/>
            <person name="Brown N.C."/>
            <person name="Bruno W.J."/>
            <person name="Buckingham J.M."/>
            <person name="Callen D.F."/>
            <person name="Campbell C.S."/>
            <person name="Campbell M.L."/>
            <person name="Campbell E.W."/>
            <person name="Caoile C."/>
            <person name="Challacombe J.F."/>
            <person name="Chasteen L.A."/>
            <person name="Chertkov O."/>
            <person name="Chi H.C."/>
            <person name="Christensen M."/>
            <person name="Clark L.M."/>
            <person name="Cohn J.D."/>
            <person name="Denys M."/>
            <person name="Detter J.C."/>
            <person name="Dickson M."/>
            <person name="Dimitrijevic-Bussod M."/>
            <person name="Escobar J."/>
            <person name="Fawcett J.J."/>
            <person name="Flowers D."/>
            <person name="Fotopulos D."/>
            <person name="Glavina T."/>
            <person name="Gomez M."/>
            <person name="Gonzales E."/>
            <person name="Goodstein D."/>
            <person name="Goodwin L.A."/>
            <person name="Grady D.L."/>
            <person name="Grigoriev I."/>
            <person name="Groza M."/>
            <person name="Hammon N."/>
            <person name="Hawkins T."/>
            <person name="Haydu L."/>
            <person name="Hildebrand C.E."/>
            <person name="Huang W."/>
            <person name="Israni S."/>
            <person name="Jett J."/>
            <person name="Jewett P.B."/>
            <person name="Kadner K."/>
            <person name="Kimball H."/>
            <person name="Kobayashi A."/>
            <person name="Krawczyk M.-C."/>
            <person name="Leyba T."/>
            <person name="Longmire J.L."/>
            <person name="Lopez F."/>
            <person name="Lou Y."/>
            <person name="Lowry S."/>
            <person name="Ludeman T."/>
            <person name="Manohar C.F."/>
            <person name="Mark G.A."/>
            <person name="McMurray K.L."/>
            <person name="Meincke L.J."/>
            <person name="Morgan J."/>
            <person name="Moyzis R.K."/>
            <person name="Mundt M.O."/>
            <person name="Munk A.C."/>
            <person name="Nandkeshwar R.D."/>
            <person name="Pitluck S."/>
            <person name="Pollard M."/>
            <person name="Predki P."/>
            <person name="Parson-Quintana B."/>
            <person name="Ramirez L."/>
            <person name="Rash S."/>
            <person name="Retterer J."/>
            <person name="Ricke D.O."/>
            <person name="Robinson D.L."/>
            <person name="Rodriguez A."/>
            <person name="Salamov A."/>
            <person name="Saunders E.H."/>
            <person name="Scott D."/>
            <person name="Shough T."/>
            <person name="Stallings R.L."/>
            <person name="Stalvey M."/>
            <person name="Sutherland R.D."/>
            <person name="Tapia R."/>
            <person name="Tesmer J.G."/>
            <person name="Thayer N."/>
            <person name="Thompson L.S."/>
            <person name="Tice H."/>
            <person name="Torney D.C."/>
            <person name="Tran-Gyamfi M."/>
            <person name="Tsai M."/>
            <person name="Ulanovsky L.E."/>
            <person name="Ustaszewska A."/>
            <person name="Vo N."/>
            <person name="White P.S."/>
            <person name="Williams A.L."/>
            <person name="Wills P.L."/>
            <person name="Wu J.-R."/>
            <person name="Wu K."/>
            <person name="Yang J."/>
            <person name="DeJong P."/>
            <person name="Bruce D."/>
            <person name="Doggett N.A."/>
            <person name="Deaven L."/>
            <person name="Schmutz J."/>
            <person name="Grimwood J."/>
            <person name="Richardson P."/>
            <person name="Rokhsar D.S."/>
            <person name="Eichler E.E."/>
            <person name="Gilna P."/>
            <person name="Lucas S.M."/>
            <person name="Myers R.M."/>
            <person name="Rubin E.M."/>
            <person name="Pennacchio L.A."/>
        </authorList>
    </citation>
    <scope>NUCLEOTIDE SEQUENCE [LARGE SCALE GENOMIC DNA]</scope>
</reference>
<reference key="4">
    <citation type="submission" date="2005-07" db="EMBL/GenBank/DDBJ databases">
        <authorList>
            <person name="Mural R.J."/>
            <person name="Istrail S."/>
            <person name="Sutton G.G."/>
            <person name="Florea L."/>
            <person name="Halpern A.L."/>
            <person name="Mobarry C.M."/>
            <person name="Lippert R."/>
            <person name="Walenz B."/>
            <person name="Shatkay H."/>
            <person name="Dew I."/>
            <person name="Miller J.R."/>
            <person name="Flanigan M.J."/>
            <person name="Edwards N.J."/>
            <person name="Bolanos R."/>
            <person name="Fasulo D."/>
            <person name="Halldorsson B.V."/>
            <person name="Hannenhalli S."/>
            <person name="Turner R."/>
            <person name="Yooseph S."/>
            <person name="Lu F."/>
            <person name="Nusskern D.R."/>
            <person name="Shue B.C."/>
            <person name="Zheng X.H."/>
            <person name="Zhong F."/>
            <person name="Delcher A.L."/>
            <person name="Huson D.H."/>
            <person name="Kravitz S.A."/>
            <person name="Mouchard L."/>
            <person name="Reinert K."/>
            <person name="Remington K.A."/>
            <person name="Clark A.G."/>
            <person name="Waterman M.S."/>
            <person name="Eichler E.E."/>
            <person name="Adams M.D."/>
            <person name="Hunkapiller M.W."/>
            <person name="Myers E.W."/>
            <person name="Venter J.C."/>
        </authorList>
    </citation>
    <scope>NUCLEOTIDE SEQUENCE [LARGE SCALE GENOMIC DNA]</scope>
</reference>
<reference key="5">
    <citation type="journal article" date="2004" name="Genome Res.">
        <title>The status, quality, and expansion of the NIH full-length cDNA project: the Mammalian Gene Collection (MGC).</title>
        <authorList>
            <consortium name="The MGC Project Team"/>
        </authorList>
    </citation>
    <scope>NUCLEOTIDE SEQUENCE [LARGE SCALE MRNA] (ISOFORMS 1 AND 2)</scope>
    <source>
        <tissue>Pancreas</tissue>
    </source>
</reference>